<sequence length="450" mass="48369">MGDTRVTVIGGGLAGSEAAWQLARAGVAVELVEMKPERRSPAHVLPGLAELVCSNSLRSDNPQNAVGLLHEELRRLGSLVLGCADATRVPAGDALAVDRERFSEAVTARLSGHPGVRIVHREVEDLPPPPALAVIATGPLTGDALAARLAEATGGRLHFYDAIAPIVAAESIDRSIAYARSRYGKGSGDDYLNLPLDEAQYHAFVDALLQGEKVPAHGFEEPRYFEGCLPIEVMAERGTEVLAHGPLKPVGLEDPRTGRWPHAVVQLRREDVEGTAWNLVGFQTRLTWPEQRRIFRAFLPGLANAEFVRLGQIHRNTFVDAPRVLAPDLSVRAAPHLFLAGQITGVEGYVESAACGLMAARAVLDRLAERAFRPPPAATALGALHRHLTGEAHPPGYDYQPSNVVFALFPPLTGRHRGKAGRKEAHVERARKELAPWIDTAPPPAVPAAG</sequence>
<comment type="function">
    <text evidence="1">Catalyzes the folate-dependent formation of 5-methyl-uridine at position 54 (M-5-U54) in all tRNAs.</text>
</comment>
<comment type="catalytic activity">
    <reaction evidence="1">
        <text>uridine(54) in tRNA + (6R)-5,10-methylene-5,6,7,8-tetrahydrofolate + NADH + H(+) = 5-methyluridine(54) in tRNA + (6S)-5,6,7,8-tetrahydrofolate + NAD(+)</text>
        <dbReference type="Rhea" id="RHEA:16873"/>
        <dbReference type="Rhea" id="RHEA-COMP:10167"/>
        <dbReference type="Rhea" id="RHEA-COMP:10193"/>
        <dbReference type="ChEBI" id="CHEBI:15378"/>
        <dbReference type="ChEBI" id="CHEBI:15636"/>
        <dbReference type="ChEBI" id="CHEBI:57453"/>
        <dbReference type="ChEBI" id="CHEBI:57540"/>
        <dbReference type="ChEBI" id="CHEBI:57945"/>
        <dbReference type="ChEBI" id="CHEBI:65315"/>
        <dbReference type="ChEBI" id="CHEBI:74447"/>
        <dbReference type="EC" id="2.1.1.74"/>
    </reaction>
</comment>
<comment type="catalytic activity">
    <reaction evidence="1">
        <text>uridine(54) in tRNA + (6R)-5,10-methylene-5,6,7,8-tetrahydrofolate + NADPH + H(+) = 5-methyluridine(54) in tRNA + (6S)-5,6,7,8-tetrahydrofolate + NADP(+)</text>
        <dbReference type="Rhea" id="RHEA:62372"/>
        <dbReference type="Rhea" id="RHEA-COMP:10167"/>
        <dbReference type="Rhea" id="RHEA-COMP:10193"/>
        <dbReference type="ChEBI" id="CHEBI:15378"/>
        <dbReference type="ChEBI" id="CHEBI:15636"/>
        <dbReference type="ChEBI" id="CHEBI:57453"/>
        <dbReference type="ChEBI" id="CHEBI:57783"/>
        <dbReference type="ChEBI" id="CHEBI:58349"/>
        <dbReference type="ChEBI" id="CHEBI:65315"/>
        <dbReference type="ChEBI" id="CHEBI:74447"/>
        <dbReference type="EC" id="2.1.1.74"/>
    </reaction>
</comment>
<comment type="cofactor">
    <cofactor evidence="1">
        <name>FAD</name>
        <dbReference type="ChEBI" id="CHEBI:57692"/>
    </cofactor>
</comment>
<comment type="subcellular location">
    <subcellularLocation>
        <location evidence="1">Cytoplasm</location>
    </subcellularLocation>
</comment>
<comment type="similarity">
    <text evidence="1">Belongs to the MnmG family. TrmFO subfamily.</text>
</comment>
<reference key="1">
    <citation type="submission" date="2006-01" db="EMBL/GenBank/DDBJ databases">
        <title>Complete sequence of Anaeromyxobacter dehalogenans 2CP-C.</title>
        <authorList>
            <person name="Copeland A."/>
            <person name="Lucas S."/>
            <person name="Lapidus A."/>
            <person name="Barry K."/>
            <person name="Detter J.C."/>
            <person name="Glavina T."/>
            <person name="Hammon N."/>
            <person name="Israni S."/>
            <person name="Pitluck S."/>
            <person name="Brettin T."/>
            <person name="Bruce D."/>
            <person name="Han C."/>
            <person name="Tapia R."/>
            <person name="Gilna P."/>
            <person name="Kiss H."/>
            <person name="Schmutz J."/>
            <person name="Larimer F."/>
            <person name="Land M."/>
            <person name="Kyrpides N."/>
            <person name="Anderson I."/>
            <person name="Sanford R.A."/>
            <person name="Ritalahti K.M."/>
            <person name="Thomas H.S."/>
            <person name="Kirby J.R."/>
            <person name="Zhulin I.B."/>
            <person name="Loeffler F.E."/>
            <person name="Richardson P."/>
        </authorList>
    </citation>
    <scope>NUCLEOTIDE SEQUENCE [LARGE SCALE GENOMIC DNA]</scope>
    <source>
        <strain>2CP-C</strain>
    </source>
</reference>
<gene>
    <name evidence="1" type="primary">trmFO</name>
    <name type="ordered locus">Adeh_2697</name>
</gene>
<name>TRMFO_ANADE</name>
<feature type="chain" id="PRO_0000346317" description="Methylenetetrahydrofolate--tRNA-(uracil-5-)-methyltransferase TrmFO">
    <location>
        <begin position="1"/>
        <end position="450"/>
    </location>
</feature>
<feature type="binding site" evidence="1">
    <location>
        <begin position="10"/>
        <end position="15"/>
    </location>
    <ligand>
        <name>FAD</name>
        <dbReference type="ChEBI" id="CHEBI:57692"/>
    </ligand>
</feature>
<accession>Q2ILE0</accession>
<dbReference type="EC" id="2.1.1.74" evidence="1"/>
<dbReference type="EMBL" id="CP000251">
    <property type="protein sequence ID" value="ABC82467.1"/>
    <property type="molecule type" value="Genomic_DNA"/>
</dbReference>
<dbReference type="RefSeq" id="WP_011421749.1">
    <property type="nucleotide sequence ID" value="NC_007760.1"/>
</dbReference>
<dbReference type="SMR" id="Q2ILE0"/>
<dbReference type="STRING" id="290397.Adeh_2697"/>
<dbReference type="KEGG" id="ade:Adeh_2697"/>
<dbReference type="eggNOG" id="COG1206">
    <property type="taxonomic scope" value="Bacteria"/>
</dbReference>
<dbReference type="HOGENOM" id="CLU_033057_1_0_7"/>
<dbReference type="OrthoDB" id="9803114at2"/>
<dbReference type="Proteomes" id="UP000001935">
    <property type="component" value="Chromosome"/>
</dbReference>
<dbReference type="GO" id="GO:0005829">
    <property type="term" value="C:cytosol"/>
    <property type="evidence" value="ECO:0007669"/>
    <property type="project" value="TreeGrafter"/>
</dbReference>
<dbReference type="GO" id="GO:0050660">
    <property type="term" value="F:flavin adenine dinucleotide binding"/>
    <property type="evidence" value="ECO:0007669"/>
    <property type="project" value="UniProtKB-UniRule"/>
</dbReference>
<dbReference type="GO" id="GO:0047151">
    <property type="term" value="F:tRNA (uracil(54)-C5)-methyltransferase activity, 5,10-methylenetetrahydrofolate-dependent"/>
    <property type="evidence" value="ECO:0007669"/>
    <property type="project" value="UniProtKB-UniRule"/>
</dbReference>
<dbReference type="GO" id="GO:0030488">
    <property type="term" value="P:tRNA methylation"/>
    <property type="evidence" value="ECO:0007669"/>
    <property type="project" value="TreeGrafter"/>
</dbReference>
<dbReference type="GO" id="GO:0002098">
    <property type="term" value="P:tRNA wobble uridine modification"/>
    <property type="evidence" value="ECO:0007669"/>
    <property type="project" value="TreeGrafter"/>
</dbReference>
<dbReference type="Gene3D" id="3.50.50.60">
    <property type="entry name" value="FAD/NAD(P)-binding domain"/>
    <property type="match status" value="2"/>
</dbReference>
<dbReference type="HAMAP" id="MF_01037">
    <property type="entry name" value="TrmFO"/>
    <property type="match status" value="1"/>
</dbReference>
<dbReference type="InterPro" id="IPR036188">
    <property type="entry name" value="FAD/NAD-bd_sf"/>
</dbReference>
<dbReference type="InterPro" id="IPR002218">
    <property type="entry name" value="MnmG-rel"/>
</dbReference>
<dbReference type="InterPro" id="IPR040131">
    <property type="entry name" value="MnmG_N"/>
</dbReference>
<dbReference type="InterPro" id="IPR004417">
    <property type="entry name" value="TrmFO"/>
</dbReference>
<dbReference type="NCBIfam" id="TIGR00137">
    <property type="entry name" value="gid_trmFO"/>
    <property type="match status" value="1"/>
</dbReference>
<dbReference type="NCBIfam" id="NF003739">
    <property type="entry name" value="PRK05335.1"/>
    <property type="match status" value="1"/>
</dbReference>
<dbReference type="PANTHER" id="PTHR11806">
    <property type="entry name" value="GLUCOSE INHIBITED DIVISION PROTEIN A"/>
    <property type="match status" value="1"/>
</dbReference>
<dbReference type="PANTHER" id="PTHR11806:SF2">
    <property type="entry name" value="METHYLENETETRAHYDROFOLATE--TRNA-(URACIL-5-)-METHYLTRANSFERASE TRMFO"/>
    <property type="match status" value="1"/>
</dbReference>
<dbReference type="Pfam" id="PF01134">
    <property type="entry name" value="GIDA"/>
    <property type="match status" value="1"/>
</dbReference>
<dbReference type="SUPFAM" id="SSF51905">
    <property type="entry name" value="FAD/NAD(P)-binding domain"/>
    <property type="match status" value="1"/>
</dbReference>
<evidence type="ECO:0000255" key="1">
    <source>
        <dbReference type="HAMAP-Rule" id="MF_01037"/>
    </source>
</evidence>
<protein>
    <recommendedName>
        <fullName evidence="1">Methylenetetrahydrofolate--tRNA-(uracil-5-)-methyltransferase TrmFO</fullName>
        <ecNumber evidence="1">2.1.1.74</ecNumber>
    </recommendedName>
    <alternativeName>
        <fullName evidence="1">Folate-dependent tRNA (uracil-5-)-methyltransferase</fullName>
    </alternativeName>
    <alternativeName>
        <fullName evidence="1">Folate-dependent tRNA(M-5-U54)-methyltransferase</fullName>
    </alternativeName>
</protein>
<organism>
    <name type="scientific">Anaeromyxobacter dehalogenans (strain 2CP-C)</name>
    <dbReference type="NCBI Taxonomy" id="290397"/>
    <lineage>
        <taxon>Bacteria</taxon>
        <taxon>Pseudomonadati</taxon>
        <taxon>Myxococcota</taxon>
        <taxon>Myxococcia</taxon>
        <taxon>Myxococcales</taxon>
        <taxon>Cystobacterineae</taxon>
        <taxon>Anaeromyxobacteraceae</taxon>
        <taxon>Anaeromyxobacter</taxon>
    </lineage>
</organism>
<keyword id="KW-0963">Cytoplasm</keyword>
<keyword id="KW-0274">FAD</keyword>
<keyword id="KW-0285">Flavoprotein</keyword>
<keyword id="KW-0489">Methyltransferase</keyword>
<keyword id="KW-0520">NAD</keyword>
<keyword id="KW-0521">NADP</keyword>
<keyword id="KW-1185">Reference proteome</keyword>
<keyword id="KW-0808">Transferase</keyword>
<keyword id="KW-0819">tRNA processing</keyword>
<proteinExistence type="inferred from homology"/>